<sequence>MSELITGQYLSEFINRFQLQLPQPDNVLTHSHYFSATNRRAAVLIPIICRPEPTLLLTRRADHLRKHAGQVAFPGGKADPDDQSLISTALREAEEEVAIPASVVHVLGKLAPLNSSSGYHVTPIVGLVPANIPFYGNDEEVAGLFEIPLHEALSLSRYHSLDIHREGINHRVYLSWYENQFIWGLTATIIRHLAQQVSI</sequence>
<feature type="chain" id="PRO_0000315593" description="Uncharacterized Nudix hydrolase NudL">
    <location>
        <begin position="1"/>
        <end position="199"/>
    </location>
</feature>
<feature type="domain" description="Nudix hydrolase" evidence="1">
    <location>
        <begin position="38"/>
        <end position="169"/>
    </location>
</feature>
<feature type="short sequence motif" description="Nudix box">
    <location>
        <begin position="76"/>
        <end position="98"/>
    </location>
</feature>
<feature type="binding site" evidence="1">
    <location>
        <position position="92"/>
    </location>
    <ligand>
        <name>Mg(2+)</name>
        <dbReference type="ChEBI" id="CHEBI:18420"/>
    </ligand>
</feature>
<feature type="binding site" evidence="1">
    <location>
        <position position="96"/>
    </location>
    <ligand>
        <name>Mg(2+)</name>
        <dbReference type="ChEBI" id="CHEBI:18420"/>
    </ligand>
</feature>
<proteinExistence type="inferred from homology"/>
<evidence type="ECO:0000255" key="1">
    <source>
        <dbReference type="HAMAP-Rule" id="MF_01592"/>
    </source>
</evidence>
<dbReference type="EC" id="3.6.1.-" evidence="1"/>
<dbReference type="EMBL" id="BX936398">
    <property type="protein sequence ID" value="CAH20887.1"/>
    <property type="molecule type" value="Genomic_DNA"/>
</dbReference>
<dbReference type="RefSeq" id="WP_002211080.1">
    <property type="nucleotide sequence ID" value="NZ_CP009712.1"/>
</dbReference>
<dbReference type="SMR" id="Q66BW8"/>
<dbReference type="KEGG" id="yps:YPTB1648"/>
<dbReference type="Proteomes" id="UP000001011">
    <property type="component" value="Chromosome"/>
</dbReference>
<dbReference type="GO" id="GO:0010945">
    <property type="term" value="F:coenzyme A diphosphatase activity"/>
    <property type="evidence" value="ECO:0007669"/>
    <property type="project" value="InterPro"/>
</dbReference>
<dbReference type="GO" id="GO:0000287">
    <property type="term" value="F:magnesium ion binding"/>
    <property type="evidence" value="ECO:0007669"/>
    <property type="project" value="UniProtKB-UniRule"/>
</dbReference>
<dbReference type="GO" id="GO:0030145">
    <property type="term" value="F:manganese ion binding"/>
    <property type="evidence" value="ECO:0007669"/>
    <property type="project" value="UniProtKB-UniRule"/>
</dbReference>
<dbReference type="GO" id="GO:0009132">
    <property type="term" value="P:nucleoside diphosphate metabolic process"/>
    <property type="evidence" value="ECO:0007669"/>
    <property type="project" value="InterPro"/>
</dbReference>
<dbReference type="CDD" id="cd03426">
    <property type="entry name" value="NUDIX_CoAse_Nudt7"/>
    <property type="match status" value="1"/>
</dbReference>
<dbReference type="Gene3D" id="3.90.79.10">
    <property type="entry name" value="Nucleoside Triphosphate Pyrophosphohydrolase"/>
    <property type="match status" value="1"/>
</dbReference>
<dbReference type="HAMAP" id="MF_01592">
    <property type="entry name" value="Nudix_NudL"/>
    <property type="match status" value="1"/>
</dbReference>
<dbReference type="InterPro" id="IPR045121">
    <property type="entry name" value="CoAse"/>
</dbReference>
<dbReference type="InterPro" id="IPR015797">
    <property type="entry name" value="NUDIX_hydrolase-like_dom_sf"/>
</dbReference>
<dbReference type="InterPro" id="IPR000086">
    <property type="entry name" value="NUDIX_hydrolase_dom"/>
</dbReference>
<dbReference type="InterPro" id="IPR000059">
    <property type="entry name" value="NUDIX_hydrolase_NudL_CS"/>
</dbReference>
<dbReference type="InterPro" id="IPR023735">
    <property type="entry name" value="Nudix_NudL"/>
</dbReference>
<dbReference type="NCBIfam" id="NF007980">
    <property type="entry name" value="PRK10707.1"/>
    <property type="match status" value="1"/>
</dbReference>
<dbReference type="PANTHER" id="PTHR12992:SF11">
    <property type="entry name" value="MITOCHONDRIAL COENZYME A DIPHOSPHATASE NUDT8"/>
    <property type="match status" value="1"/>
</dbReference>
<dbReference type="PANTHER" id="PTHR12992">
    <property type="entry name" value="NUDIX HYDROLASE"/>
    <property type="match status" value="1"/>
</dbReference>
<dbReference type="Pfam" id="PF00293">
    <property type="entry name" value="NUDIX"/>
    <property type="match status" value="1"/>
</dbReference>
<dbReference type="SUPFAM" id="SSF55811">
    <property type="entry name" value="Nudix"/>
    <property type="match status" value="1"/>
</dbReference>
<dbReference type="PROSITE" id="PS51462">
    <property type="entry name" value="NUDIX"/>
    <property type="match status" value="1"/>
</dbReference>
<dbReference type="PROSITE" id="PS01293">
    <property type="entry name" value="NUDIX_COA"/>
    <property type="match status" value="1"/>
</dbReference>
<gene>
    <name evidence="1" type="primary">nudL</name>
    <name type="ordered locus">YPTB1648</name>
</gene>
<protein>
    <recommendedName>
        <fullName evidence="1">Uncharacterized Nudix hydrolase NudL</fullName>
        <ecNumber evidence="1">3.6.1.-</ecNumber>
    </recommendedName>
</protein>
<organism>
    <name type="scientific">Yersinia pseudotuberculosis serotype I (strain IP32953)</name>
    <dbReference type="NCBI Taxonomy" id="273123"/>
    <lineage>
        <taxon>Bacteria</taxon>
        <taxon>Pseudomonadati</taxon>
        <taxon>Pseudomonadota</taxon>
        <taxon>Gammaproteobacteria</taxon>
        <taxon>Enterobacterales</taxon>
        <taxon>Yersiniaceae</taxon>
        <taxon>Yersinia</taxon>
    </lineage>
</organism>
<name>NUDL_YERPS</name>
<comment type="function">
    <text evidence="1">Probably mediates the hydrolysis of some nucleoside diphosphate derivatives.</text>
</comment>
<comment type="cofactor">
    <cofactor evidence="1">
        <name>Mn(2+)</name>
        <dbReference type="ChEBI" id="CHEBI:29035"/>
    </cofactor>
    <cofactor evidence="1">
        <name>Mg(2+)</name>
        <dbReference type="ChEBI" id="CHEBI:18420"/>
    </cofactor>
</comment>
<comment type="similarity">
    <text evidence="1">Belongs to the Nudix hydrolase family. PCD1 subfamily.</text>
</comment>
<keyword id="KW-0378">Hydrolase</keyword>
<keyword id="KW-0460">Magnesium</keyword>
<keyword id="KW-0464">Manganese</keyword>
<keyword id="KW-0479">Metal-binding</keyword>
<reference key="1">
    <citation type="journal article" date="2004" name="Proc. Natl. Acad. Sci. U.S.A.">
        <title>Insights into the evolution of Yersinia pestis through whole-genome comparison with Yersinia pseudotuberculosis.</title>
        <authorList>
            <person name="Chain P.S.G."/>
            <person name="Carniel E."/>
            <person name="Larimer F.W."/>
            <person name="Lamerdin J."/>
            <person name="Stoutland P.O."/>
            <person name="Regala W.M."/>
            <person name="Georgescu A.M."/>
            <person name="Vergez L.M."/>
            <person name="Land M.L."/>
            <person name="Motin V.L."/>
            <person name="Brubaker R.R."/>
            <person name="Fowler J."/>
            <person name="Hinnebusch J."/>
            <person name="Marceau M."/>
            <person name="Medigue C."/>
            <person name="Simonet M."/>
            <person name="Chenal-Francisque V."/>
            <person name="Souza B."/>
            <person name="Dacheux D."/>
            <person name="Elliott J.M."/>
            <person name="Derbise A."/>
            <person name="Hauser L.J."/>
            <person name="Garcia E."/>
        </authorList>
    </citation>
    <scope>NUCLEOTIDE SEQUENCE [LARGE SCALE GENOMIC DNA]</scope>
    <source>
        <strain>IP32953</strain>
    </source>
</reference>
<accession>Q66BW8</accession>